<organism>
    <name type="scientific">Streptococcus pneumoniae serotype 19F (strain G54)</name>
    <dbReference type="NCBI Taxonomy" id="512566"/>
    <lineage>
        <taxon>Bacteria</taxon>
        <taxon>Bacillati</taxon>
        <taxon>Bacillota</taxon>
        <taxon>Bacilli</taxon>
        <taxon>Lactobacillales</taxon>
        <taxon>Streptococcaceae</taxon>
        <taxon>Streptococcus</taxon>
    </lineage>
</organism>
<proteinExistence type="inferred from homology"/>
<sequence>MKLHELKPAEGSRKVRNRVGRGTSSGNGKTSGRGQKGQKARSGGGVRLGFEGGQTPLFRRLPKRGFTNINAKEYAIVNLDQLNVFEDGAEVTPVVLIEAGIVKAEKSGIKILGNGELTKKLTVKAAKFSKSAEEAITAKGGSVEVI</sequence>
<name>RL15_STRP4</name>
<comment type="function">
    <text evidence="1">Binds to the 23S rRNA.</text>
</comment>
<comment type="subunit">
    <text evidence="1">Part of the 50S ribosomal subunit.</text>
</comment>
<comment type="similarity">
    <text evidence="1">Belongs to the universal ribosomal protein uL15 family.</text>
</comment>
<protein>
    <recommendedName>
        <fullName evidence="1">Large ribosomal subunit protein uL15</fullName>
    </recommendedName>
    <alternativeName>
        <fullName evidence="3">50S ribosomal protein L15</fullName>
    </alternativeName>
</protein>
<keyword id="KW-0687">Ribonucleoprotein</keyword>
<keyword id="KW-0689">Ribosomal protein</keyword>
<keyword id="KW-0694">RNA-binding</keyword>
<keyword id="KW-0699">rRNA-binding</keyword>
<dbReference type="EMBL" id="CP001015">
    <property type="protein sequence ID" value="ACF55556.1"/>
    <property type="molecule type" value="Genomic_DNA"/>
</dbReference>
<dbReference type="SMR" id="B5E6H4"/>
<dbReference type="KEGG" id="spx:SPG_0214"/>
<dbReference type="HOGENOM" id="CLU_055188_4_2_9"/>
<dbReference type="GO" id="GO:0022625">
    <property type="term" value="C:cytosolic large ribosomal subunit"/>
    <property type="evidence" value="ECO:0007669"/>
    <property type="project" value="TreeGrafter"/>
</dbReference>
<dbReference type="GO" id="GO:0019843">
    <property type="term" value="F:rRNA binding"/>
    <property type="evidence" value="ECO:0007669"/>
    <property type="project" value="UniProtKB-UniRule"/>
</dbReference>
<dbReference type="GO" id="GO:0003735">
    <property type="term" value="F:structural constituent of ribosome"/>
    <property type="evidence" value="ECO:0007669"/>
    <property type="project" value="InterPro"/>
</dbReference>
<dbReference type="GO" id="GO:0006412">
    <property type="term" value="P:translation"/>
    <property type="evidence" value="ECO:0007669"/>
    <property type="project" value="UniProtKB-UniRule"/>
</dbReference>
<dbReference type="FunFam" id="3.100.10.10:FF:000004">
    <property type="entry name" value="50S ribosomal protein L15"/>
    <property type="match status" value="1"/>
</dbReference>
<dbReference type="Gene3D" id="3.100.10.10">
    <property type="match status" value="1"/>
</dbReference>
<dbReference type="HAMAP" id="MF_01341">
    <property type="entry name" value="Ribosomal_uL15"/>
    <property type="match status" value="1"/>
</dbReference>
<dbReference type="InterPro" id="IPR030878">
    <property type="entry name" value="Ribosomal_uL15"/>
</dbReference>
<dbReference type="InterPro" id="IPR021131">
    <property type="entry name" value="Ribosomal_uL15/eL18"/>
</dbReference>
<dbReference type="InterPro" id="IPR036227">
    <property type="entry name" value="Ribosomal_uL15/eL18_sf"/>
</dbReference>
<dbReference type="InterPro" id="IPR005749">
    <property type="entry name" value="Ribosomal_uL15_bac-type"/>
</dbReference>
<dbReference type="InterPro" id="IPR001196">
    <property type="entry name" value="Ribosomal_uL15_CS"/>
</dbReference>
<dbReference type="NCBIfam" id="TIGR01071">
    <property type="entry name" value="rplO_bact"/>
    <property type="match status" value="1"/>
</dbReference>
<dbReference type="PANTHER" id="PTHR12934">
    <property type="entry name" value="50S RIBOSOMAL PROTEIN L15"/>
    <property type="match status" value="1"/>
</dbReference>
<dbReference type="PANTHER" id="PTHR12934:SF11">
    <property type="entry name" value="LARGE RIBOSOMAL SUBUNIT PROTEIN UL15M"/>
    <property type="match status" value="1"/>
</dbReference>
<dbReference type="Pfam" id="PF00828">
    <property type="entry name" value="Ribosomal_L27A"/>
    <property type="match status" value="1"/>
</dbReference>
<dbReference type="SUPFAM" id="SSF52080">
    <property type="entry name" value="Ribosomal proteins L15p and L18e"/>
    <property type="match status" value="1"/>
</dbReference>
<dbReference type="PROSITE" id="PS00475">
    <property type="entry name" value="RIBOSOMAL_L15"/>
    <property type="match status" value="1"/>
</dbReference>
<feature type="chain" id="PRO_1000142885" description="Large ribosomal subunit protein uL15">
    <location>
        <begin position="1"/>
        <end position="146"/>
    </location>
</feature>
<feature type="region of interest" description="Disordered" evidence="2">
    <location>
        <begin position="1"/>
        <end position="51"/>
    </location>
</feature>
<feature type="compositionally biased region" description="Basic and acidic residues" evidence="2">
    <location>
        <begin position="1"/>
        <end position="13"/>
    </location>
</feature>
<feature type="compositionally biased region" description="Gly residues" evidence="2">
    <location>
        <begin position="23"/>
        <end position="35"/>
    </location>
</feature>
<feature type="compositionally biased region" description="Gly residues" evidence="2">
    <location>
        <begin position="42"/>
        <end position="51"/>
    </location>
</feature>
<accession>B5E6H4</accession>
<reference key="1">
    <citation type="journal article" date="2001" name="Microb. Drug Resist.">
        <title>Annotated draft genomic sequence from a Streptococcus pneumoniae type 19F clinical isolate.</title>
        <authorList>
            <person name="Dopazo J."/>
            <person name="Mendoza A."/>
            <person name="Herrero J."/>
            <person name="Caldara F."/>
            <person name="Humbert Y."/>
            <person name="Friedli L."/>
            <person name="Guerrier M."/>
            <person name="Grand-Schenk E."/>
            <person name="Gandin C."/>
            <person name="de Francesco M."/>
            <person name="Polissi A."/>
            <person name="Buell G."/>
            <person name="Feger G."/>
            <person name="Garcia E."/>
            <person name="Peitsch M."/>
            <person name="Garcia-Bustos J.F."/>
        </authorList>
    </citation>
    <scope>NUCLEOTIDE SEQUENCE [LARGE SCALE GENOMIC DNA]</scope>
    <source>
        <strain>G54</strain>
    </source>
</reference>
<reference key="2">
    <citation type="submission" date="2008-03" db="EMBL/GenBank/DDBJ databases">
        <title>Pneumococcal beta glucoside metabolism investigated by whole genome comparison.</title>
        <authorList>
            <person name="Mulas L."/>
            <person name="Trappetti C."/>
            <person name="Hakenbeck R."/>
            <person name="Iannelli F."/>
            <person name="Pozzi G."/>
            <person name="Davidsen T.M."/>
            <person name="Tettelin H."/>
            <person name="Oggioni M."/>
        </authorList>
    </citation>
    <scope>NUCLEOTIDE SEQUENCE [LARGE SCALE GENOMIC DNA]</scope>
    <source>
        <strain>G54</strain>
    </source>
</reference>
<evidence type="ECO:0000255" key="1">
    <source>
        <dbReference type="HAMAP-Rule" id="MF_01341"/>
    </source>
</evidence>
<evidence type="ECO:0000256" key="2">
    <source>
        <dbReference type="SAM" id="MobiDB-lite"/>
    </source>
</evidence>
<evidence type="ECO:0000305" key="3"/>
<gene>
    <name evidence="1" type="primary">rplO</name>
    <name type="ordered locus">SPG_0214</name>
</gene>